<evidence type="ECO:0000250" key="1">
    <source>
        <dbReference type="UniProtKB" id="O59284"/>
    </source>
</evidence>
<evidence type="ECO:0000250" key="2">
    <source>
        <dbReference type="UniProtKB" id="P11759"/>
    </source>
</evidence>
<evidence type="ECO:0000269" key="3">
    <source>
    </source>
</evidence>
<evidence type="ECO:0000305" key="4"/>
<feature type="chain" id="PRO_0000337836" description="UDP-N-acetyl-D-mannosamine dehydrogenase">
    <location>
        <begin position="1"/>
        <end position="427"/>
    </location>
</feature>
<feature type="active site" description="Proton donor/acceptor" evidence="1">
    <location>
        <position position="207"/>
    </location>
</feature>
<feature type="active site" description="Nucleophile" evidence="1">
    <location>
        <position position="261"/>
    </location>
</feature>
<feature type="binding site" description="in chain A" evidence="2">
    <location>
        <position position="19"/>
    </location>
    <ligand>
        <name>NAD(+)</name>
        <dbReference type="ChEBI" id="CHEBI:57540"/>
        <note>ligand shared between homodimeric partners</note>
    </ligand>
</feature>
<feature type="binding site" description="in chain A" evidence="2">
    <location>
        <position position="20"/>
    </location>
    <ligand>
        <name>NAD(+)</name>
        <dbReference type="ChEBI" id="CHEBI:57540"/>
        <note>ligand shared between homodimeric partners</note>
    </ligand>
</feature>
<feature type="binding site" description="in chain A" evidence="2">
    <location>
        <position position="39"/>
    </location>
    <ligand>
        <name>NAD(+)</name>
        <dbReference type="ChEBI" id="CHEBI:57540"/>
        <note>ligand shared between homodimeric partners</note>
    </ligand>
</feature>
<feature type="binding site" description="in chain A" evidence="2">
    <location>
        <position position="44"/>
    </location>
    <ligand>
        <name>NAD(+)</name>
        <dbReference type="ChEBI" id="CHEBI:57540"/>
        <note>ligand shared between homodimeric partners</note>
    </ligand>
</feature>
<feature type="binding site" description="in chain A" evidence="2">
    <location>
        <position position="91"/>
    </location>
    <ligand>
        <name>NAD(+)</name>
        <dbReference type="ChEBI" id="CHEBI:57540"/>
        <note>ligand shared between homodimeric partners</note>
    </ligand>
</feature>
<feature type="binding site" description="in chain A" evidence="2">
    <location>
        <position position="130"/>
    </location>
    <ligand>
        <name>NAD(+)</name>
        <dbReference type="ChEBI" id="CHEBI:57540"/>
        <note>ligand shared between homodimeric partners</note>
    </ligand>
</feature>
<feature type="binding site" description="in chain A" evidence="1">
    <location>
        <position position="155"/>
    </location>
    <ligand>
        <name>UDP-N-acetyl-alpha-D-mannosaminouronate</name>
        <dbReference type="ChEBI" id="CHEBI:70731"/>
        <note>ligand shared between homodimeric partners</note>
    </ligand>
</feature>
<feature type="binding site" description="in chain A" evidence="1">
    <location>
        <position position="156"/>
    </location>
    <ligand>
        <name>UDP-N-acetyl-alpha-D-mannosaminouronate</name>
        <dbReference type="ChEBI" id="CHEBI:70731"/>
        <note>ligand shared between homodimeric partners</note>
    </ligand>
</feature>
<feature type="binding site" description="in chain A" evidence="1">
    <location>
        <position position="207"/>
    </location>
    <ligand>
        <name>UDP-N-acetyl-alpha-D-mannosaminouronate</name>
        <dbReference type="ChEBI" id="CHEBI:70731"/>
        <note>ligand shared between homodimeric partners</note>
    </ligand>
</feature>
<feature type="binding site" description="in chain A" evidence="1">
    <location>
        <position position="211"/>
    </location>
    <ligand>
        <name>UDP-N-acetyl-alpha-D-mannosaminouronate</name>
        <dbReference type="ChEBI" id="CHEBI:70731"/>
        <note>ligand shared between homodimeric partners</note>
    </ligand>
</feature>
<feature type="binding site" description="in chain A" evidence="1">
    <location>
        <position position="214"/>
    </location>
    <ligand>
        <name>UDP-N-acetyl-alpha-D-mannosaminouronate</name>
        <dbReference type="ChEBI" id="CHEBI:70731"/>
        <note>ligand shared between homodimeric partners</note>
    </ligand>
</feature>
<feature type="binding site" description="in chain B" evidence="1">
    <location>
        <position position="245"/>
    </location>
    <ligand>
        <name>UDP-N-acetyl-alpha-D-mannosaminouronate</name>
        <dbReference type="ChEBI" id="CHEBI:70731"/>
        <note>ligand shared between homodimeric partners</note>
    </ligand>
</feature>
<feature type="binding site" description="in chain B" evidence="1">
    <location>
        <position position="247"/>
    </location>
    <ligand>
        <name>UDP-N-acetyl-alpha-D-mannosaminouronate</name>
        <dbReference type="ChEBI" id="CHEBI:70731"/>
        <note>ligand shared between homodimeric partners</note>
    </ligand>
</feature>
<feature type="binding site" description="in chain A" evidence="1">
    <location>
        <position position="258"/>
    </location>
    <ligand>
        <name>UDP-N-acetyl-alpha-D-mannosaminouronate</name>
        <dbReference type="ChEBI" id="CHEBI:70731"/>
        <note>ligand shared between homodimeric partners</note>
    </ligand>
</feature>
<feature type="binding site" description="in chain A" evidence="1">
    <location>
        <position position="318"/>
    </location>
    <ligand>
        <name>UDP-N-acetyl-alpha-D-mannosaminouronate</name>
        <dbReference type="ChEBI" id="CHEBI:70731"/>
        <note>ligand shared between homodimeric partners</note>
    </ligand>
</feature>
<feature type="binding site" description="in chain A" evidence="1">
    <location>
        <position position="319"/>
    </location>
    <ligand>
        <name>UDP-N-acetyl-alpha-D-mannosaminouronate</name>
        <dbReference type="ChEBI" id="CHEBI:70731"/>
        <note>ligand shared between homodimeric partners</note>
    </ligand>
</feature>
<feature type="binding site" description="in chain B" evidence="2">
    <location>
        <position position="326"/>
    </location>
    <ligand>
        <name>NAD(+)</name>
        <dbReference type="ChEBI" id="CHEBI:57540"/>
        <note>ligand shared between homodimeric partners</note>
    </ligand>
</feature>
<feature type="binding site" description="in chain A" evidence="1">
    <location>
        <position position="404"/>
    </location>
    <ligand>
        <name>UDP-N-acetyl-alpha-D-mannosaminouronate</name>
        <dbReference type="ChEBI" id="CHEBI:70731"/>
        <note>ligand shared between homodimeric partners</note>
    </ligand>
</feature>
<protein>
    <recommendedName>
        <fullName>UDP-N-acetyl-D-mannosamine dehydrogenase</fullName>
        <ecNumber>1.1.1.336</ecNumber>
    </recommendedName>
    <alternativeName>
        <fullName>UDP-ManNAc 6-dehydrogenase</fullName>
    </alternativeName>
</protein>
<name>WECC_METMP</name>
<gene>
    <name type="primary">wecC</name>
    <name type="ordered locus">MMP0706</name>
</gene>
<accession>Q6LZC3</accession>
<sequence length="427" mass="47252">MEKHGDYDIKKICVIGLGYIGLPTASMLANHGYDVVGVDVNEKRVNQIKNGELKIEEPGLLTLVKGAINSKNLNVRTSATEADAFIICVPTPALAKEDGSKKCDLSYVMSAVEAILPFVKDGNLIVIESTIPPETTKKIYETLNKKIYVAHCPERVLPGKILKELVENDRIIGGINKKSAEMAKEIYKSFVEGQIYTTDSNTAEMVKLMENTYRDINIALANEFAKICDEIGVNVWDAIKIANKHPRVNILNPGPGVGGHCISIDPWFIVEKTNNAKFIRAARELNDNMPAYVCNSVLSELKKLGIEKPKISIFGATYKGNVEDTRESPSKNVIKMLLENGATVSTYDPHASYFEYPLSTLDECISGSDCIVVLTDHDVFKTIKKDDIDEICPKLKNKIVFDTKNILEHSLWKKAGFTVKLLGNGAW</sequence>
<dbReference type="EC" id="1.1.1.336"/>
<dbReference type="EMBL" id="BX950229">
    <property type="protein sequence ID" value="CAF30262.1"/>
    <property type="molecule type" value="Genomic_DNA"/>
</dbReference>
<dbReference type="RefSeq" id="WP_011170650.1">
    <property type="nucleotide sequence ID" value="NC_005791.1"/>
</dbReference>
<dbReference type="SMR" id="Q6LZC3"/>
<dbReference type="STRING" id="267377.MMP0706"/>
<dbReference type="EnsemblBacteria" id="CAF30262">
    <property type="protein sequence ID" value="CAF30262"/>
    <property type="gene ID" value="MMP0706"/>
</dbReference>
<dbReference type="GeneID" id="2761881"/>
<dbReference type="KEGG" id="mmp:MMP0706"/>
<dbReference type="PATRIC" id="fig|267377.15.peg.723"/>
<dbReference type="eggNOG" id="arCOG00252">
    <property type="taxonomic scope" value="Archaea"/>
</dbReference>
<dbReference type="HOGENOM" id="CLU_023810_3_2_2"/>
<dbReference type="OrthoDB" id="372050at2157"/>
<dbReference type="BRENDA" id="1.1.1.336">
    <property type="organism ID" value="3262"/>
</dbReference>
<dbReference type="SABIO-RK" id="Q6LZC3"/>
<dbReference type="Proteomes" id="UP000000590">
    <property type="component" value="Chromosome"/>
</dbReference>
<dbReference type="GO" id="GO:0051287">
    <property type="term" value="F:NAD binding"/>
    <property type="evidence" value="ECO:0007669"/>
    <property type="project" value="InterPro"/>
</dbReference>
<dbReference type="GO" id="GO:0016628">
    <property type="term" value="F:oxidoreductase activity, acting on the CH-CH group of donors, NAD or NADP as acceptor"/>
    <property type="evidence" value="ECO:0007669"/>
    <property type="project" value="InterPro"/>
</dbReference>
<dbReference type="GO" id="GO:0016616">
    <property type="term" value="F:oxidoreductase activity, acting on the CH-OH group of donors, NAD or NADP as acceptor"/>
    <property type="evidence" value="ECO:0000314"/>
    <property type="project" value="CACAO"/>
</dbReference>
<dbReference type="GO" id="GO:0089714">
    <property type="term" value="F:UDP-N-acetyl-D-mannosamine dehydrogenase activity"/>
    <property type="evidence" value="ECO:0007669"/>
    <property type="project" value="UniProtKB-EC"/>
</dbReference>
<dbReference type="GO" id="GO:0000271">
    <property type="term" value="P:polysaccharide biosynthetic process"/>
    <property type="evidence" value="ECO:0007669"/>
    <property type="project" value="InterPro"/>
</dbReference>
<dbReference type="FunFam" id="3.40.50.720:FF:000945">
    <property type="entry name" value="UDP-glucose/GDP-mannose dehydrogenase family protein"/>
    <property type="match status" value="1"/>
</dbReference>
<dbReference type="Gene3D" id="3.40.50.720">
    <property type="entry name" value="NAD(P)-binding Rossmann-like Domain"/>
    <property type="match status" value="2"/>
</dbReference>
<dbReference type="InterPro" id="IPR008927">
    <property type="entry name" value="6-PGluconate_DH-like_C_sf"/>
</dbReference>
<dbReference type="InterPro" id="IPR036291">
    <property type="entry name" value="NAD(P)-bd_dom_sf"/>
</dbReference>
<dbReference type="InterPro" id="IPR017476">
    <property type="entry name" value="UDP-Glc/GDP-Man"/>
</dbReference>
<dbReference type="InterPro" id="IPR014027">
    <property type="entry name" value="UDP-Glc/GDP-Man_DH_C"/>
</dbReference>
<dbReference type="InterPro" id="IPR036220">
    <property type="entry name" value="UDP-Glc/GDP-Man_DH_C_sf"/>
</dbReference>
<dbReference type="InterPro" id="IPR014026">
    <property type="entry name" value="UDP-Glc/GDP-Man_DH_dimer"/>
</dbReference>
<dbReference type="InterPro" id="IPR001732">
    <property type="entry name" value="UDP-Glc/GDP-Man_DH_N"/>
</dbReference>
<dbReference type="InterPro" id="IPR028359">
    <property type="entry name" value="UDP_ManNAc/GlcNAc_DH"/>
</dbReference>
<dbReference type="NCBIfam" id="TIGR03026">
    <property type="entry name" value="NDP-sugDHase"/>
    <property type="match status" value="1"/>
</dbReference>
<dbReference type="PANTHER" id="PTHR43491">
    <property type="entry name" value="UDP-N-ACETYL-D-MANNOSAMINE DEHYDROGENASE"/>
    <property type="match status" value="1"/>
</dbReference>
<dbReference type="PANTHER" id="PTHR43491:SF2">
    <property type="entry name" value="UDP-N-ACETYL-D-MANNOSAMINE DEHYDROGENASE"/>
    <property type="match status" value="1"/>
</dbReference>
<dbReference type="Pfam" id="PF00984">
    <property type="entry name" value="UDPG_MGDP_dh"/>
    <property type="match status" value="1"/>
</dbReference>
<dbReference type="Pfam" id="PF03720">
    <property type="entry name" value="UDPG_MGDP_dh_C"/>
    <property type="match status" value="1"/>
</dbReference>
<dbReference type="Pfam" id="PF03721">
    <property type="entry name" value="UDPG_MGDP_dh_N"/>
    <property type="match status" value="1"/>
</dbReference>
<dbReference type="PIRSF" id="PIRSF500136">
    <property type="entry name" value="UDP_ManNAc_DH"/>
    <property type="match status" value="1"/>
</dbReference>
<dbReference type="PIRSF" id="PIRSF000124">
    <property type="entry name" value="UDPglc_GDPman_dh"/>
    <property type="match status" value="1"/>
</dbReference>
<dbReference type="SMART" id="SM00984">
    <property type="entry name" value="UDPG_MGDP_dh_C"/>
    <property type="match status" value="1"/>
</dbReference>
<dbReference type="SUPFAM" id="SSF48179">
    <property type="entry name" value="6-phosphogluconate dehydrogenase C-terminal domain-like"/>
    <property type="match status" value="1"/>
</dbReference>
<dbReference type="SUPFAM" id="SSF51735">
    <property type="entry name" value="NAD(P)-binding Rossmann-fold domains"/>
    <property type="match status" value="1"/>
</dbReference>
<dbReference type="SUPFAM" id="SSF52413">
    <property type="entry name" value="UDP-glucose/GDP-mannose dehydrogenase C-terminal domain"/>
    <property type="match status" value="1"/>
</dbReference>
<keyword id="KW-0520">NAD</keyword>
<keyword id="KW-0560">Oxidoreductase</keyword>
<keyword id="KW-1185">Reference proteome</keyword>
<organism>
    <name type="scientific">Methanococcus maripaludis (strain DSM 14266 / JCM 13030 / NBRC 101832 / S2 / LL)</name>
    <dbReference type="NCBI Taxonomy" id="267377"/>
    <lineage>
        <taxon>Archaea</taxon>
        <taxon>Methanobacteriati</taxon>
        <taxon>Methanobacteriota</taxon>
        <taxon>Methanomada group</taxon>
        <taxon>Methanococci</taxon>
        <taxon>Methanococcales</taxon>
        <taxon>Methanococcaceae</taxon>
        <taxon>Methanococcus</taxon>
    </lineage>
</organism>
<comment type="function">
    <text evidence="3">Catalyzes the four-electron oxidation of UDP-N-acetyl-D-mannosamine (UDP-ManNAc), reducing NAD(+) and releasing UDP-N-acetylmannosaminuronic acid (UDP-ManNAcA). Cannot use NADP instead of NAD.</text>
</comment>
<comment type="catalytic activity">
    <reaction evidence="3">
        <text>UDP-N-acetyl-alpha-D-mannosamine + 2 NAD(+) + H2O = UDP-N-acetyl-alpha-D-mannosaminouronate + 2 NADH + 3 H(+)</text>
        <dbReference type="Rhea" id="RHEA:25780"/>
        <dbReference type="ChEBI" id="CHEBI:15377"/>
        <dbReference type="ChEBI" id="CHEBI:15378"/>
        <dbReference type="ChEBI" id="CHEBI:57540"/>
        <dbReference type="ChEBI" id="CHEBI:57945"/>
        <dbReference type="ChEBI" id="CHEBI:68623"/>
        <dbReference type="ChEBI" id="CHEBI:70731"/>
        <dbReference type="EC" id="1.1.1.336"/>
    </reaction>
</comment>
<comment type="biophysicochemical properties">
    <kinetics>
        <KM evidence="3">0.57 mM for NAD(+)</KM>
    </kinetics>
</comment>
<comment type="subunit">
    <text evidence="3">Homotetramer; probably dimer of dimers.</text>
</comment>
<comment type="similarity">
    <text evidence="4">Belongs to the UDP-glucose/GDP-mannose dehydrogenase family.</text>
</comment>
<proteinExistence type="evidence at protein level"/>
<reference key="1">
    <citation type="journal article" date="2004" name="J. Bacteriol.">
        <title>Complete genome sequence of the genetically tractable hydrogenotrophic methanogen Methanococcus maripaludis.</title>
        <authorList>
            <person name="Hendrickson E.L."/>
            <person name="Kaul R."/>
            <person name="Zhou Y."/>
            <person name="Bovee D."/>
            <person name="Chapman P."/>
            <person name="Chung J."/>
            <person name="Conway de Macario E."/>
            <person name="Dodsworth J.A."/>
            <person name="Gillett W."/>
            <person name="Graham D.E."/>
            <person name="Hackett M."/>
            <person name="Haydock A.K."/>
            <person name="Kang A."/>
            <person name="Land M.L."/>
            <person name="Levy R."/>
            <person name="Lie T.J."/>
            <person name="Major T.A."/>
            <person name="Moore B.C."/>
            <person name="Porat I."/>
            <person name="Palmeiri A."/>
            <person name="Rouse G."/>
            <person name="Saenphimmachak C."/>
            <person name="Soell D."/>
            <person name="Van Dien S."/>
            <person name="Wang T."/>
            <person name="Whitman W.B."/>
            <person name="Xia Q."/>
            <person name="Zhang Y."/>
            <person name="Larimer F.W."/>
            <person name="Olson M.V."/>
            <person name="Leigh J.A."/>
        </authorList>
    </citation>
    <scope>NUCLEOTIDE SEQUENCE [LARGE SCALE GENOMIC DNA]</scope>
    <source>
        <strain>DSM 14266 / JCM 13030 / NBRC 101832 / S2 / LL</strain>
    </source>
</reference>
<reference key="2">
    <citation type="journal article" date="2008" name="J. Bacteriol.">
        <title>Acetamido sugar biosynthesis in the Euryarchaea.</title>
        <authorList>
            <person name="Namboori S.C."/>
            <person name="Graham D.E."/>
        </authorList>
    </citation>
    <scope>FUNCTION</scope>
    <scope>CATALYTIC ACTIVITY</scope>
    <scope>SUBSTRATE SPECIFICITY</scope>
    <scope>KINETIC PARAMETERS</scope>
    <scope>SUBUNIT</scope>
    <source>
        <strain>900</strain>
    </source>
</reference>